<accession>P0A5V9</accession>
<accession>A0A1R3XX17</accession>
<accession>P58287</accession>
<accession>X2BGV8</accession>
<proteinExistence type="inferred from homology"/>
<keyword id="KW-1185">Reference proteome</keyword>
<keyword id="KW-0687">Ribonucleoprotein</keyword>
<keyword id="KW-0689">Ribosomal protein</keyword>
<name>RL32_MYCBO</name>
<organism>
    <name type="scientific">Mycobacterium bovis (strain ATCC BAA-935 / AF2122/97)</name>
    <dbReference type="NCBI Taxonomy" id="233413"/>
    <lineage>
        <taxon>Bacteria</taxon>
        <taxon>Bacillati</taxon>
        <taxon>Actinomycetota</taxon>
        <taxon>Actinomycetes</taxon>
        <taxon>Mycobacteriales</taxon>
        <taxon>Mycobacteriaceae</taxon>
        <taxon>Mycobacterium</taxon>
        <taxon>Mycobacterium tuberculosis complex</taxon>
    </lineage>
</organism>
<reference key="1">
    <citation type="journal article" date="2003" name="Proc. Natl. Acad. Sci. U.S.A.">
        <title>The complete genome sequence of Mycobacterium bovis.</title>
        <authorList>
            <person name="Garnier T."/>
            <person name="Eiglmeier K."/>
            <person name="Camus J.-C."/>
            <person name="Medina N."/>
            <person name="Mansoor H."/>
            <person name="Pryor M."/>
            <person name="Duthoy S."/>
            <person name="Grondin S."/>
            <person name="Lacroix C."/>
            <person name="Monsempe C."/>
            <person name="Simon S."/>
            <person name="Harris B."/>
            <person name="Atkin R."/>
            <person name="Doggett J."/>
            <person name="Mayes R."/>
            <person name="Keating L."/>
            <person name="Wheeler P.R."/>
            <person name="Parkhill J."/>
            <person name="Barrell B.G."/>
            <person name="Cole S.T."/>
            <person name="Gordon S.V."/>
            <person name="Hewinson R.G."/>
        </authorList>
    </citation>
    <scope>NUCLEOTIDE SEQUENCE [LARGE SCALE GENOMIC DNA]</scope>
    <source>
        <strain>ATCC BAA-935 / AF2122/97</strain>
    </source>
</reference>
<reference key="2">
    <citation type="journal article" date="2017" name="Genome Announc.">
        <title>Updated reference genome sequence and annotation of Mycobacterium bovis AF2122/97.</title>
        <authorList>
            <person name="Malone K.M."/>
            <person name="Farrell D."/>
            <person name="Stuber T.P."/>
            <person name="Schubert O.T."/>
            <person name="Aebersold R."/>
            <person name="Robbe-Austerman S."/>
            <person name="Gordon S.V."/>
        </authorList>
    </citation>
    <scope>NUCLEOTIDE SEQUENCE [LARGE SCALE GENOMIC DNA]</scope>
    <scope>GENOME REANNOTATION</scope>
    <source>
        <strain>ATCC BAA-935 / AF2122/97</strain>
    </source>
</reference>
<sequence>MAVPKRRKSRSNTRSRRSQWKAAKTELVGVTVAGHAHKVPRRLLKAARLGLIDFDKR</sequence>
<gene>
    <name type="primary">rpmF</name>
    <name type="ordered locus">BQ2027_MB1005</name>
</gene>
<evidence type="ECO:0000256" key="1">
    <source>
        <dbReference type="SAM" id="MobiDB-lite"/>
    </source>
</evidence>
<evidence type="ECO:0000305" key="2"/>
<feature type="chain" id="PRO_0000172374" description="Large ribosomal subunit protein bL32">
    <location>
        <begin position="1"/>
        <end position="57"/>
    </location>
</feature>
<feature type="region of interest" description="Disordered" evidence="1">
    <location>
        <begin position="1"/>
        <end position="22"/>
    </location>
</feature>
<feature type="compositionally biased region" description="Basic residues" evidence="1">
    <location>
        <begin position="1"/>
        <end position="19"/>
    </location>
</feature>
<protein>
    <recommendedName>
        <fullName evidence="2">Large ribosomal subunit protein bL32</fullName>
    </recommendedName>
    <alternativeName>
        <fullName>50S ribosomal protein L32</fullName>
    </alternativeName>
</protein>
<dbReference type="EMBL" id="LT708304">
    <property type="protein sequence ID" value="SIT99604.1"/>
    <property type="molecule type" value="Genomic_DNA"/>
</dbReference>
<dbReference type="RefSeq" id="NP_854662.1">
    <property type="nucleotide sequence ID" value="NC_002945.3"/>
</dbReference>
<dbReference type="RefSeq" id="WP_003405053.1">
    <property type="nucleotide sequence ID" value="NC_002945.4"/>
</dbReference>
<dbReference type="SMR" id="P0A5V9"/>
<dbReference type="GeneID" id="45424948"/>
<dbReference type="KEGG" id="mbo:BQ2027_MB1005"/>
<dbReference type="PATRIC" id="fig|233413.5.peg.1094"/>
<dbReference type="Proteomes" id="UP000001419">
    <property type="component" value="Chromosome"/>
</dbReference>
<dbReference type="GO" id="GO:0015934">
    <property type="term" value="C:large ribosomal subunit"/>
    <property type="evidence" value="ECO:0007669"/>
    <property type="project" value="InterPro"/>
</dbReference>
<dbReference type="GO" id="GO:0003735">
    <property type="term" value="F:structural constituent of ribosome"/>
    <property type="evidence" value="ECO:0007669"/>
    <property type="project" value="InterPro"/>
</dbReference>
<dbReference type="GO" id="GO:0006412">
    <property type="term" value="P:translation"/>
    <property type="evidence" value="ECO:0007669"/>
    <property type="project" value="UniProtKB-UniRule"/>
</dbReference>
<dbReference type="HAMAP" id="MF_00340">
    <property type="entry name" value="Ribosomal_bL32"/>
    <property type="match status" value="1"/>
</dbReference>
<dbReference type="InterPro" id="IPR002677">
    <property type="entry name" value="Ribosomal_bL32"/>
</dbReference>
<dbReference type="InterPro" id="IPR011332">
    <property type="entry name" value="Ribosomal_zn-bd"/>
</dbReference>
<dbReference type="NCBIfam" id="TIGR01031">
    <property type="entry name" value="rpmF_bact"/>
    <property type="match status" value="1"/>
</dbReference>
<dbReference type="Pfam" id="PF01783">
    <property type="entry name" value="Ribosomal_L32p"/>
    <property type="match status" value="1"/>
</dbReference>
<dbReference type="SUPFAM" id="SSF57829">
    <property type="entry name" value="Zn-binding ribosomal proteins"/>
    <property type="match status" value="1"/>
</dbReference>
<comment type="similarity">
    <text evidence="2">Belongs to the bacterial ribosomal protein bL32 family.</text>
</comment>